<organism>
    <name type="scientific">Escherichia coli O127:H6 (strain E2348/69 / EPEC)</name>
    <dbReference type="NCBI Taxonomy" id="574521"/>
    <lineage>
        <taxon>Bacteria</taxon>
        <taxon>Pseudomonadati</taxon>
        <taxon>Pseudomonadota</taxon>
        <taxon>Gammaproteobacteria</taxon>
        <taxon>Enterobacterales</taxon>
        <taxon>Enterobacteriaceae</taxon>
        <taxon>Escherichia</taxon>
    </lineage>
</organism>
<name>DCYD_ECO27</name>
<comment type="function">
    <text evidence="1">Catalyzes the alpha,beta-elimination reaction of D-cysteine and of several D-cysteine derivatives. It could be a defense mechanism against D-cysteine.</text>
</comment>
<comment type="catalytic activity">
    <reaction evidence="1">
        <text>D-cysteine + H2O = hydrogen sulfide + pyruvate + NH4(+) + H(+)</text>
        <dbReference type="Rhea" id="RHEA:11268"/>
        <dbReference type="ChEBI" id="CHEBI:15361"/>
        <dbReference type="ChEBI" id="CHEBI:15377"/>
        <dbReference type="ChEBI" id="CHEBI:15378"/>
        <dbReference type="ChEBI" id="CHEBI:28938"/>
        <dbReference type="ChEBI" id="CHEBI:29919"/>
        <dbReference type="ChEBI" id="CHEBI:35236"/>
        <dbReference type="EC" id="4.4.1.15"/>
    </reaction>
</comment>
<comment type="cofactor">
    <cofactor evidence="1">
        <name>pyridoxal 5'-phosphate</name>
        <dbReference type="ChEBI" id="CHEBI:597326"/>
    </cofactor>
</comment>
<comment type="subunit">
    <text evidence="1">Homodimer.</text>
</comment>
<comment type="similarity">
    <text evidence="1">Belongs to the ACC deaminase/D-cysteine desulfhydrase family.</text>
</comment>
<reference key="1">
    <citation type="journal article" date="2009" name="J. Bacteriol.">
        <title>Complete genome sequence and comparative genome analysis of enteropathogenic Escherichia coli O127:H6 strain E2348/69.</title>
        <authorList>
            <person name="Iguchi A."/>
            <person name="Thomson N.R."/>
            <person name="Ogura Y."/>
            <person name="Saunders D."/>
            <person name="Ooka T."/>
            <person name="Henderson I.R."/>
            <person name="Harris D."/>
            <person name="Asadulghani M."/>
            <person name="Kurokawa K."/>
            <person name="Dean P."/>
            <person name="Kenny B."/>
            <person name="Quail M.A."/>
            <person name="Thurston S."/>
            <person name="Dougan G."/>
            <person name="Hayashi T."/>
            <person name="Parkhill J."/>
            <person name="Frankel G."/>
        </authorList>
    </citation>
    <scope>NUCLEOTIDE SEQUENCE [LARGE SCALE GENOMIC DNA]</scope>
    <source>
        <strain>E2348/69 / EPEC</strain>
    </source>
</reference>
<evidence type="ECO:0000255" key="1">
    <source>
        <dbReference type="HAMAP-Rule" id="MF_01045"/>
    </source>
</evidence>
<protein>
    <recommendedName>
        <fullName evidence="1">D-cysteine desulfhydrase</fullName>
        <ecNumber evidence="1">4.4.1.15</ecNumber>
    </recommendedName>
</protein>
<keyword id="KW-0456">Lyase</keyword>
<keyword id="KW-0663">Pyridoxal phosphate</keyword>
<keyword id="KW-1185">Reference proteome</keyword>
<dbReference type="EC" id="4.4.1.15" evidence="1"/>
<dbReference type="EMBL" id="FM180568">
    <property type="protein sequence ID" value="CAS09585.1"/>
    <property type="molecule type" value="Genomic_DNA"/>
</dbReference>
<dbReference type="RefSeq" id="WP_001128237.1">
    <property type="nucleotide sequence ID" value="NC_011601.1"/>
</dbReference>
<dbReference type="SMR" id="B7UST8"/>
<dbReference type="KEGG" id="ecg:E2348C_2037"/>
<dbReference type="HOGENOM" id="CLU_048897_1_0_6"/>
<dbReference type="Proteomes" id="UP000008205">
    <property type="component" value="Chromosome"/>
</dbReference>
<dbReference type="GO" id="GO:0019148">
    <property type="term" value="F:D-cysteine desulfhydrase activity"/>
    <property type="evidence" value="ECO:0007669"/>
    <property type="project" value="UniProtKB-UniRule"/>
</dbReference>
<dbReference type="GO" id="GO:0046416">
    <property type="term" value="P:D-amino acid metabolic process"/>
    <property type="evidence" value="ECO:0007669"/>
    <property type="project" value="UniProtKB-UniRule"/>
</dbReference>
<dbReference type="CDD" id="cd06449">
    <property type="entry name" value="ACCD"/>
    <property type="match status" value="1"/>
</dbReference>
<dbReference type="FunFam" id="3.40.50.1100:FF:000019">
    <property type="entry name" value="D-cysteine desulfhydrase"/>
    <property type="match status" value="1"/>
</dbReference>
<dbReference type="Gene3D" id="3.40.50.1100">
    <property type="match status" value="2"/>
</dbReference>
<dbReference type="HAMAP" id="MF_01045">
    <property type="entry name" value="D_Cys_desulfhydr"/>
    <property type="match status" value="1"/>
</dbReference>
<dbReference type="InterPro" id="IPR027278">
    <property type="entry name" value="ACCD_DCysDesulf"/>
</dbReference>
<dbReference type="InterPro" id="IPR005966">
    <property type="entry name" value="D-Cys_desShydrase"/>
</dbReference>
<dbReference type="InterPro" id="IPR023702">
    <property type="entry name" value="D_Cys_desulphydr_bac"/>
</dbReference>
<dbReference type="InterPro" id="IPR001926">
    <property type="entry name" value="TrpB-like_PALP"/>
</dbReference>
<dbReference type="InterPro" id="IPR036052">
    <property type="entry name" value="TrpB-like_PALP_sf"/>
</dbReference>
<dbReference type="NCBIfam" id="TIGR01275">
    <property type="entry name" value="ACC_deam_rel"/>
    <property type="match status" value="1"/>
</dbReference>
<dbReference type="NCBIfam" id="NF003029">
    <property type="entry name" value="PRK03910.1-1"/>
    <property type="match status" value="1"/>
</dbReference>
<dbReference type="NCBIfam" id="NF003030">
    <property type="entry name" value="PRK03910.1-3"/>
    <property type="match status" value="1"/>
</dbReference>
<dbReference type="NCBIfam" id="NF003032">
    <property type="entry name" value="PRK03910.1-5"/>
    <property type="match status" value="1"/>
</dbReference>
<dbReference type="PANTHER" id="PTHR43780">
    <property type="entry name" value="1-AMINOCYCLOPROPANE-1-CARBOXYLATE DEAMINASE-RELATED"/>
    <property type="match status" value="1"/>
</dbReference>
<dbReference type="PANTHER" id="PTHR43780:SF2">
    <property type="entry name" value="1-AMINOCYCLOPROPANE-1-CARBOXYLATE DEAMINASE-RELATED"/>
    <property type="match status" value="1"/>
</dbReference>
<dbReference type="Pfam" id="PF00291">
    <property type="entry name" value="PALP"/>
    <property type="match status" value="1"/>
</dbReference>
<dbReference type="PIRSF" id="PIRSF006278">
    <property type="entry name" value="ACCD_DCysDesulf"/>
    <property type="match status" value="1"/>
</dbReference>
<dbReference type="SUPFAM" id="SSF53686">
    <property type="entry name" value="Tryptophan synthase beta subunit-like PLP-dependent enzymes"/>
    <property type="match status" value="1"/>
</dbReference>
<feature type="chain" id="PRO_1000149599" description="D-cysteine desulfhydrase">
    <location>
        <begin position="1"/>
        <end position="328"/>
    </location>
</feature>
<feature type="modified residue" description="N6-(pyridoxal phosphate)lysine" evidence="1">
    <location>
        <position position="51"/>
    </location>
</feature>
<proteinExistence type="inferred from homology"/>
<sequence length="328" mass="35183">MPLHNLTRFPRLEFIGAPTPLEYLPRFSDYLGREIFIKRDDVTPMAMGGNKLRKLEFLAADALREGADTLITAGAIQSNHVRQTAAVAAKLGLHCVALLENPIGTTAENYLTNGNRLLLDLFNTQIEMCDALTDPNTQLEELATRVEAQGFRPYVIPVGGSNALGALGYVESALEIAQQCEGAVNISSVVVASGSAGTHAGLAVGLEHLMPESELIGVTVSRSVADQLPKVVNLQQAIAKELELTASAEILLWDDYFAPGYGVPNDEGMEAVKLLARLEGILLDPVYTGKAMAGLIDGISQKRFKDEGPILFIHTGGAPALFAYHPHV</sequence>
<gene>
    <name evidence="1" type="primary">dcyD</name>
    <name type="ordered locus">E2348C_2037</name>
</gene>
<accession>B7UST8</accession>